<protein>
    <recommendedName>
        <fullName evidence="1">Phosphopantetheine adenylyltransferase</fullName>
        <ecNumber evidence="1">2.7.7.3</ecNumber>
    </recommendedName>
    <alternativeName>
        <fullName evidence="1">Dephospho-CoA pyrophosphorylase</fullName>
    </alternativeName>
    <alternativeName>
        <fullName evidence="1">Pantetheine-phosphate adenylyltransferase</fullName>
        <shortName evidence="1">PPAT</shortName>
    </alternativeName>
</protein>
<gene>
    <name evidence="1" type="primary">coaD</name>
    <name type="ordered locus">SGO_0651</name>
</gene>
<proteinExistence type="inferred from homology"/>
<feature type="chain" id="PRO_1000076797" description="Phosphopantetheine adenylyltransferase">
    <location>
        <begin position="1"/>
        <end position="164"/>
    </location>
</feature>
<feature type="binding site" evidence="1">
    <location>
        <begin position="11"/>
        <end position="12"/>
    </location>
    <ligand>
        <name>ATP</name>
        <dbReference type="ChEBI" id="CHEBI:30616"/>
    </ligand>
</feature>
<feature type="binding site" evidence="1">
    <location>
        <position position="11"/>
    </location>
    <ligand>
        <name>substrate</name>
    </ligand>
</feature>
<feature type="binding site" evidence="1">
    <location>
        <position position="19"/>
    </location>
    <ligand>
        <name>ATP</name>
        <dbReference type="ChEBI" id="CHEBI:30616"/>
    </ligand>
</feature>
<feature type="binding site" evidence="1">
    <location>
        <position position="43"/>
    </location>
    <ligand>
        <name>substrate</name>
    </ligand>
</feature>
<feature type="binding site" evidence="1">
    <location>
        <position position="76"/>
    </location>
    <ligand>
        <name>substrate</name>
    </ligand>
</feature>
<feature type="binding site" evidence="1">
    <location>
        <position position="90"/>
    </location>
    <ligand>
        <name>substrate</name>
    </ligand>
</feature>
<feature type="binding site" evidence="1">
    <location>
        <begin position="91"/>
        <end position="93"/>
    </location>
    <ligand>
        <name>ATP</name>
        <dbReference type="ChEBI" id="CHEBI:30616"/>
    </ligand>
</feature>
<feature type="binding site" evidence="1">
    <location>
        <position position="101"/>
    </location>
    <ligand>
        <name>ATP</name>
        <dbReference type="ChEBI" id="CHEBI:30616"/>
    </ligand>
</feature>
<feature type="binding site" evidence="1">
    <location>
        <begin position="126"/>
        <end position="132"/>
    </location>
    <ligand>
        <name>ATP</name>
        <dbReference type="ChEBI" id="CHEBI:30616"/>
    </ligand>
</feature>
<feature type="site" description="Transition state stabilizer" evidence="1">
    <location>
        <position position="19"/>
    </location>
</feature>
<comment type="function">
    <text evidence="1">Reversibly transfers an adenylyl group from ATP to 4'-phosphopantetheine, yielding dephospho-CoA (dPCoA) and pyrophosphate.</text>
</comment>
<comment type="catalytic activity">
    <reaction evidence="1">
        <text>(R)-4'-phosphopantetheine + ATP + H(+) = 3'-dephospho-CoA + diphosphate</text>
        <dbReference type="Rhea" id="RHEA:19801"/>
        <dbReference type="ChEBI" id="CHEBI:15378"/>
        <dbReference type="ChEBI" id="CHEBI:30616"/>
        <dbReference type="ChEBI" id="CHEBI:33019"/>
        <dbReference type="ChEBI" id="CHEBI:57328"/>
        <dbReference type="ChEBI" id="CHEBI:61723"/>
        <dbReference type="EC" id="2.7.7.3"/>
    </reaction>
</comment>
<comment type="cofactor">
    <cofactor evidence="1">
        <name>Mg(2+)</name>
        <dbReference type="ChEBI" id="CHEBI:18420"/>
    </cofactor>
</comment>
<comment type="pathway">
    <text evidence="1">Cofactor biosynthesis; coenzyme A biosynthesis; CoA from (R)-pantothenate: step 4/5.</text>
</comment>
<comment type="subunit">
    <text evidence="1">Homohexamer.</text>
</comment>
<comment type="subcellular location">
    <subcellularLocation>
        <location evidence="1">Cytoplasm</location>
    </subcellularLocation>
</comment>
<comment type="similarity">
    <text evidence="1">Belongs to the bacterial CoaD family.</text>
</comment>
<name>COAD_STRGC</name>
<reference key="1">
    <citation type="journal article" date="2007" name="J. Bacteriol.">
        <title>Genome-wide transcriptional changes in Streptococcus gordonii in response to competence signaling peptide.</title>
        <authorList>
            <person name="Vickerman M.M."/>
            <person name="Iobst S."/>
            <person name="Jesionowski A.M."/>
            <person name="Gill S.R."/>
        </authorList>
    </citation>
    <scope>NUCLEOTIDE SEQUENCE [LARGE SCALE GENOMIC DNA]</scope>
    <source>
        <strain>Challis / ATCC 35105 / BCRC 15272 / CH1 / DL1 / V288</strain>
    </source>
</reference>
<accession>A8AVZ4</accession>
<dbReference type="EC" id="2.7.7.3" evidence="1"/>
<dbReference type="EMBL" id="CP000725">
    <property type="protein sequence ID" value="ABV11171.1"/>
    <property type="molecule type" value="Genomic_DNA"/>
</dbReference>
<dbReference type="RefSeq" id="WP_012000129.1">
    <property type="nucleotide sequence ID" value="NC_009785.1"/>
</dbReference>
<dbReference type="SMR" id="A8AVZ4"/>
<dbReference type="STRING" id="467705.SGO_0651"/>
<dbReference type="KEGG" id="sgo:SGO_0651"/>
<dbReference type="eggNOG" id="COG0669">
    <property type="taxonomic scope" value="Bacteria"/>
</dbReference>
<dbReference type="HOGENOM" id="CLU_100149_0_1_9"/>
<dbReference type="UniPathway" id="UPA00241">
    <property type="reaction ID" value="UER00355"/>
</dbReference>
<dbReference type="Proteomes" id="UP000001131">
    <property type="component" value="Chromosome"/>
</dbReference>
<dbReference type="GO" id="GO:0005737">
    <property type="term" value="C:cytoplasm"/>
    <property type="evidence" value="ECO:0007669"/>
    <property type="project" value="UniProtKB-SubCell"/>
</dbReference>
<dbReference type="GO" id="GO:0005524">
    <property type="term" value="F:ATP binding"/>
    <property type="evidence" value="ECO:0007669"/>
    <property type="project" value="UniProtKB-KW"/>
</dbReference>
<dbReference type="GO" id="GO:0004595">
    <property type="term" value="F:pantetheine-phosphate adenylyltransferase activity"/>
    <property type="evidence" value="ECO:0007669"/>
    <property type="project" value="UniProtKB-UniRule"/>
</dbReference>
<dbReference type="GO" id="GO:0015937">
    <property type="term" value="P:coenzyme A biosynthetic process"/>
    <property type="evidence" value="ECO:0007669"/>
    <property type="project" value="UniProtKB-UniRule"/>
</dbReference>
<dbReference type="CDD" id="cd02163">
    <property type="entry name" value="PPAT"/>
    <property type="match status" value="1"/>
</dbReference>
<dbReference type="Gene3D" id="3.40.50.620">
    <property type="entry name" value="HUPs"/>
    <property type="match status" value="1"/>
</dbReference>
<dbReference type="HAMAP" id="MF_00151">
    <property type="entry name" value="PPAT_bact"/>
    <property type="match status" value="1"/>
</dbReference>
<dbReference type="InterPro" id="IPR004821">
    <property type="entry name" value="Cyt_trans-like"/>
</dbReference>
<dbReference type="InterPro" id="IPR001980">
    <property type="entry name" value="PPAT"/>
</dbReference>
<dbReference type="InterPro" id="IPR014729">
    <property type="entry name" value="Rossmann-like_a/b/a_fold"/>
</dbReference>
<dbReference type="NCBIfam" id="TIGR01510">
    <property type="entry name" value="coaD_prev_kdtB"/>
    <property type="match status" value="1"/>
</dbReference>
<dbReference type="NCBIfam" id="TIGR00125">
    <property type="entry name" value="cyt_tran_rel"/>
    <property type="match status" value="1"/>
</dbReference>
<dbReference type="PANTHER" id="PTHR21342">
    <property type="entry name" value="PHOSPHOPANTETHEINE ADENYLYLTRANSFERASE"/>
    <property type="match status" value="1"/>
</dbReference>
<dbReference type="PANTHER" id="PTHR21342:SF1">
    <property type="entry name" value="PHOSPHOPANTETHEINE ADENYLYLTRANSFERASE"/>
    <property type="match status" value="1"/>
</dbReference>
<dbReference type="Pfam" id="PF01467">
    <property type="entry name" value="CTP_transf_like"/>
    <property type="match status" value="1"/>
</dbReference>
<dbReference type="PRINTS" id="PR01020">
    <property type="entry name" value="LPSBIOSNTHSS"/>
</dbReference>
<dbReference type="SUPFAM" id="SSF52374">
    <property type="entry name" value="Nucleotidylyl transferase"/>
    <property type="match status" value="1"/>
</dbReference>
<evidence type="ECO:0000255" key="1">
    <source>
        <dbReference type="HAMAP-Rule" id="MF_00151"/>
    </source>
</evidence>
<sequence length="164" mass="18958">MSDKIGLFTGSFDPMTKGHVDLIERASRLFDKLYVGIFYNREKSGFFTIEARERIVKEALQHLDNVEVITSQNELAVTVARRLGAKAFVRGLRNSQDLDYEADMTFFNRELAGELETIFLLSKPAYQHISSSRIRELIAFQQDIADYVPQSVIKELERRTYEKN</sequence>
<keyword id="KW-0067">ATP-binding</keyword>
<keyword id="KW-0173">Coenzyme A biosynthesis</keyword>
<keyword id="KW-0963">Cytoplasm</keyword>
<keyword id="KW-0460">Magnesium</keyword>
<keyword id="KW-0547">Nucleotide-binding</keyword>
<keyword id="KW-0548">Nucleotidyltransferase</keyword>
<keyword id="KW-1185">Reference proteome</keyword>
<keyword id="KW-0808">Transferase</keyword>
<organism>
    <name type="scientific">Streptococcus gordonii (strain Challis / ATCC 35105 / BCRC 15272 / CH1 / DL1 / V288)</name>
    <dbReference type="NCBI Taxonomy" id="467705"/>
    <lineage>
        <taxon>Bacteria</taxon>
        <taxon>Bacillati</taxon>
        <taxon>Bacillota</taxon>
        <taxon>Bacilli</taxon>
        <taxon>Lactobacillales</taxon>
        <taxon>Streptococcaceae</taxon>
        <taxon>Streptococcus</taxon>
    </lineage>
</organism>